<keyword id="KW-0963">Cytoplasm</keyword>
<keyword id="KW-0342">GTP-binding</keyword>
<keyword id="KW-0547">Nucleotide-binding</keyword>
<keyword id="KW-0648">Protein biosynthesis</keyword>
<reference key="1">
    <citation type="journal article" date="2004" name="Nucleic Acids Res.">
        <title>Unique features revealed by the genome sequence of Acinetobacter sp. ADP1, a versatile and naturally transformation competent bacterium.</title>
        <authorList>
            <person name="Barbe V."/>
            <person name="Vallenet D."/>
            <person name="Fonknechten N."/>
            <person name="Kreimeyer A."/>
            <person name="Oztas S."/>
            <person name="Labarre L."/>
            <person name="Cruveiller S."/>
            <person name="Robert C."/>
            <person name="Duprat S."/>
            <person name="Wincker P."/>
            <person name="Ornston L.N."/>
            <person name="Weissenbach J."/>
            <person name="Marliere P."/>
            <person name="Cohen G.N."/>
            <person name="Medigue C."/>
        </authorList>
    </citation>
    <scope>NUCLEOTIDE SEQUENCE [LARGE SCALE GENOMIC DNA]</scope>
    <source>
        <strain>ATCC 33305 / BD413 / ADP1</strain>
    </source>
</reference>
<sequence length="529" mass="60375">MFKDQLAKEVNSRRTFAIISHPDAGKTTMTEKLLLWGKAIQVAGMVKSRKSDRSATSDWMEMEKERGISITTSVMQFPYKQHTINLLDTPGHEDFSEDTYRTLTAVDSALMVIDGAKGVEERTIKLMEVCRMRDTPIISFVNKMDREIREPLELLDEIENVLNIRCVPITWPLGMGRDFAGVYNLLENKLYLYKAGFGSTITDIEVRDGYDHADVREKVGELAWASFEESLELVQMANEPLDRELFLQGKQTPVLFGTALGNFAVDHVLDAFINWAPEPKAHPAQERNVDATEEGFSGFVFKIQANMDPKHRDRIAFMRICSGKYEKGLKMNHVRIGKDVRISDALTFLAGEREHLEEAWPGDIIGLHNHGTIQIGDTFTSGEKLHFTGIPHFAPEMFRRVRLRDPLKSKQLQKGLKELSEEGATQVFMPQISNDLIVGAVGVLQFDVVAYRLKEEYKVDCIYEPISVNTVRWVHCDDEKIFNEFKKKAHDQLSVDGGGHLTYLAPSRVNLQLMQERWPDIQFRNTREH</sequence>
<feature type="chain" id="PRO_0000242167" description="Peptide chain release factor 3">
    <location>
        <begin position="1"/>
        <end position="529"/>
    </location>
</feature>
<feature type="domain" description="tr-type G">
    <location>
        <begin position="11"/>
        <end position="280"/>
    </location>
</feature>
<feature type="binding site" evidence="1">
    <location>
        <begin position="20"/>
        <end position="27"/>
    </location>
    <ligand>
        <name>GTP</name>
        <dbReference type="ChEBI" id="CHEBI:37565"/>
    </ligand>
</feature>
<feature type="binding site" evidence="1">
    <location>
        <begin position="88"/>
        <end position="92"/>
    </location>
    <ligand>
        <name>GTP</name>
        <dbReference type="ChEBI" id="CHEBI:37565"/>
    </ligand>
</feature>
<feature type="binding site" evidence="1">
    <location>
        <begin position="142"/>
        <end position="145"/>
    </location>
    <ligand>
        <name>GTP</name>
        <dbReference type="ChEBI" id="CHEBI:37565"/>
    </ligand>
</feature>
<name>RF3_ACIAD</name>
<dbReference type="EMBL" id="CR543861">
    <property type="protein sequence ID" value="CAG69792.1"/>
    <property type="molecule type" value="Genomic_DNA"/>
</dbReference>
<dbReference type="RefSeq" id="WP_004924422.1">
    <property type="nucleotide sequence ID" value="NC_005966.1"/>
</dbReference>
<dbReference type="SMR" id="Q6F823"/>
<dbReference type="STRING" id="202950.GCA_001485005_02752"/>
<dbReference type="GeneID" id="45235314"/>
<dbReference type="KEGG" id="aci:ACIAD3095"/>
<dbReference type="eggNOG" id="COG4108">
    <property type="taxonomic scope" value="Bacteria"/>
</dbReference>
<dbReference type="HOGENOM" id="CLU_002794_2_1_6"/>
<dbReference type="OrthoDB" id="9801472at2"/>
<dbReference type="BioCyc" id="ASP62977:ACIAD_RS13995-MONOMER"/>
<dbReference type="Proteomes" id="UP000000430">
    <property type="component" value="Chromosome"/>
</dbReference>
<dbReference type="GO" id="GO:0005829">
    <property type="term" value="C:cytosol"/>
    <property type="evidence" value="ECO:0007669"/>
    <property type="project" value="TreeGrafter"/>
</dbReference>
<dbReference type="GO" id="GO:0005525">
    <property type="term" value="F:GTP binding"/>
    <property type="evidence" value="ECO:0007669"/>
    <property type="project" value="UniProtKB-UniRule"/>
</dbReference>
<dbReference type="GO" id="GO:0003924">
    <property type="term" value="F:GTPase activity"/>
    <property type="evidence" value="ECO:0007669"/>
    <property type="project" value="InterPro"/>
</dbReference>
<dbReference type="GO" id="GO:0097216">
    <property type="term" value="F:guanosine tetraphosphate binding"/>
    <property type="evidence" value="ECO:0007669"/>
    <property type="project" value="UniProtKB-ARBA"/>
</dbReference>
<dbReference type="GO" id="GO:0016150">
    <property type="term" value="F:translation release factor activity, codon nonspecific"/>
    <property type="evidence" value="ECO:0007669"/>
    <property type="project" value="TreeGrafter"/>
</dbReference>
<dbReference type="GO" id="GO:0016149">
    <property type="term" value="F:translation release factor activity, codon specific"/>
    <property type="evidence" value="ECO:0007669"/>
    <property type="project" value="UniProtKB-UniRule"/>
</dbReference>
<dbReference type="GO" id="GO:0006449">
    <property type="term" value="P:regulation of translational termination"/>
    <property type="evidence" value="ECO:0007669"/>
    <property type="project" value="UniProtKB-UniRule"/>
</dbReference>
<dbReference type="CDD" id="cd04169">
    <property type="entry name" value="RF3"/>
    <property type="match status" value="1"/>
</dbReference>
<dbReference type="CDD" id="cd03689">
    <property type="entry name" value="RF3_II"/>
    <property type="match status" value="1"/>
</dbReference>
<dbReference type="CDD" id="cd16259">
    <property type="entry name" value="RF3_III"/>
    <property type="match status" value="1"/>
</dbReference>
<dbReference type="FunFam" id="2.40.30.10:FF:000040">
    <property type="entry name" value="Peptide chain release factor 3"/>
    <property type="match status" value="1"/>
</dbReference>
<dbReference type="FunFam" id="3.30.70.3280:FF:000001">
    <property type="entry name" value="Peptide chain release factor 3"/>
    <property type="match status" value="1"/>
</dbReference>
<dbReference type="FunFam" id="3.40.50.300:FF:000542">
    <property type="entry name" value="Peptide chain release factor 3"/>
    <property type="match status" value="1"/>
</dbReference>
<dbReference type="Gene3D" id="3.40.50.300">
    <property type="entry name" value="P-loop containing nucleotide triphosphate hydrolases"/>
    <property type="match status" value="2"/>
</dbReference>
<dbReference type="Gene3D" id="3.30.70.3280">
    <property type="entry name" value="Peptide chain release factor 3, domain III"/>
    <property type="match status" value="1"/>
</dbReference>
<dbReference type="HAMAP" id="MF_00072">
    <property type="entry name" value="Rel_fac_3"/>
    <property type="match status" value="1"/>
</dbReference>
<dbReference type="InterPro" id="IPR053905">
    <property type="entry name" value="EF-G-like_DII"/>
</dbReference>
<dbReference type="InterPro" id="IPR035647">
    <property type="entry name" value="EFG_III/V"/>
</dbReference>
<dbReference type="InterPro" id="IPR031157">
    <property type="entry name" value="G_TR_CS"/>
</dbReference>
<dbReference type="InterPro" id="IPR027417">
    <property type="entry name" value="P-loop_NTPase"/>
</dbReference>
<dbReference type="InterPro" id="IPR004548">
    <property type="entry name" value="PrfC"/>
</dbReference>
<dbReference type="InterPro" id="IPR032090">
    <property type="entry name" value="RF3_C"/>
</dbReference>
<dbReference type="InterPro" id="IPR038467">
    <property type="entry name" value="RF3_dom_3_sf"/>
</dbReference>
<dbReference type="InterPro" id="IPR041732">
    <property type="entry name" value="RF3_GTP-bd"/>
</dbReference>
<dbReference type="InterPro" id="IPR005225">
    <property type="entry name" value="Small_GTP-bd"/>
</dbReference>
<dbReference type="InterPro" id="IPR000795">
    <property type="entry name" value="T_Tr_GTP-bd_dom"/>
</dbReference>
<dbReference type="InterPro" id="IPR009000">
    <property type="entry name" value="Transl_B-barrel_sf"/>
</dbReference>
<dbReference type="NCBIfam" id="TIGR00503">
    <property type="entry name" value="prfC"/>
    <property type="match status" value="1"/>
</dbReference>
<dbReference type="NCBIfam" id="NF001964">
    <property type="entry name" value="PRK00741.1"/>
    <property type="match status" value="1"/>
</dbReference>
<dbReference type="NCBIfam" id="TIGR00231">
    <property type="entry name" value="small_GTP"/>
    <property type="match status" value="1"/>
</dbReference>
<dbReference type="PANTHER" id="PTHR43556">
    <property type="entry name" value="PEPTIDE CHAIN RELEASE FACTOR RF3"/>
    <property type="match status" value="1"/>
</dbReference>
<dbReference type="PANTHER" id="PTHR43556:SF2">
    <property type="entry name" value="PEPTIDE CHAIN RELEASE FACTOR RF3"/>
    <property type="match status" value="1"/>
</dbReference>
<dbReference type="Pfam" id="PF22042">
    <property type="entry name" value="EF-G_D2"/>
    <property type="match status" value="1"/>
</dbReference>
<dbReference type="Pfam" id="PF00009">
    <property type="entry name" value="GTP_EFTU"/>
    <property type="match status" value="1"/>
</dbReference>
<dbReference type="Pfam" id="PF16658">
    <property type="entry name" value="RF3_C"/>
    <property type="match status" value="1"/>
</dbReference>
<dbReference type="PRINTS" id="PR00315">
    <property type="entry name" value="ELONGATNFCT"/>
</dbReference>
<dbReference type="SUPFAM" id="SSF54980">
    <property type="entry name" value="EF-G C-terminal domain-like"/>
    <property type="match status" value="1"/>
</dbReference>
<dbReference type="SUPFAM" id="SSF52540">
    <property type="entry name" value="P-loop containing nucleoside triphosphate hydrolases"/>
    <property type="match status" value="1"/>
</dbReference>
<dbReference type="SUPFAM" id="SSF50447">
    <property type="entry name" value="Translation proteins"/>
    <property type="match status" value="1"/>
</dbReference>
<dbReference type="PROSITE" id="PS00301">
    <property type="entry name" value="G_TR_1"/>
    <property type="match status" value="1"/>
</dbReference>
<dbReference type="PROSITE" id="PS51722">
    <property type="entry name" value="G_TR_2"/>
    <property type="match status" value="1"/>
</dbReference>
<organism>
    <name type="scientific">Acinetobacter baylyi (strain ATCC 33305 / BD413 / ADP1)</name>
    <dbReference type="NCBI Taxonomy" id="62977"/>
    <lineage>
        <taxon>Bacteria</taxon>
        <taxon>Pseudomonadati</taxon>
        <taxon>Pseudomonadota</taxon>
        <taxon>Gammaproteobacteria</taxon>
        <taxon>Moraxellales</taxon>
        <taxon>Moraxellaceae</taxon>
        <taxon>Acinetobacter</taxon>
    </lineage>
</organism>
<protein>
    <recommendedName>
        <fullName evidence="1">Peptide chain release factor 3</fullName>
        <shortName evidence="1">RF-3</shortName>
    </recommendedName>
</protein>
<proteinExistence type="inferred from homology"/>
<accession>Q6F823</accession>
<comment type="function">
    <text evidence="1">Increases the formation of ribosomal termination complexes and stimulates activities of RF-1 and RF-2. It binds guanine nucleotides and has strong preference for UGA stop codons. It may interact directly with the ribosome. The stimulation of RF-1 and RF-2 is significantly reduced by GTP and GDP, but not by GMP.</text>
</comment>
<comment type="subcellular location">
    <subcellularLocation>
        <location evidence="1">Cytoplasm</location>
    </subcellularLocation>
</comment>
<comment type="similarity">
    <text evidence="1">Belongs to the TRAFAC class translation factor GTPase superfamily. Classic translation factor GTPase family. PrfC subfamily.</text>
</comment>
<evidence type="ECO:0000255" key="1">
    <source>
        <dbReference type="HAMAP-Rule" id="MF_00072"/>
    </source>
</evidence>
<gene>
    <name evidence="1" type="primary">prfC</name>
    <name type="ordered locus">ACIAD3095</name>
</gene>